<reference key="1">
    <citation type="submission" date="2002-03" db="EMBL/GenBank/DDBJ databases">
        <title>Chloroplast DNA variation of Acer campestre, A. monspessulanum and related species in Europe.</title>
        <authorList>
            <person name="Bittkau C."/>
            <person name="Mueller-Starck G."/>
        </authorList>
    </citation>
    <scope>NUCLEOTIDE SEQUENCE [GENOMIC DNA]</scope>
    <source>
        <strain>Iolate 13b AMO 03</strain>
        <strain>Isolate 20 AMO 01</strain>
        <strain>Isolate 24/2 AMO 02</strain>
        <strain>Isolate Mar AMO 01</strain>
    </source>
</reference>
<evidence type="ECO:0000255" key="1">
    <source>
        <dbReference type="HAMAP-Rule" id="MF_01390"/>
    </source>
</evidence>
<dbReference type="EMBL" id="AJ438789">
    <property type="protein sequence ID" value="CAD27633.1"/>
    <property type="molecule type" value="Genomic_DNA"/>
</dbReference>
<dbReference type="EMBL" id="AJ438790">
    <property type="protein sequence ID" value="CAD27634.1"/>
    <property type="molecule type" value="Genomic_DNA"/>
</dbReference>
<dbReference type="EMBL" id="AJ438791">
    <property type="protein sequence ID" value="CAD27635.1"/>
    <property type="molecule type" value="Genomic_DNA"/>
</dbReference>
<dbReference type="EMBL" id="AJ438792">
    <property type="protein sequence ID" value="CAD27636.1"/>
    <property type="molecule type" value="Genomic_DNA"/>
</dbReference>
<dbReference type="RefSeq" id="YP_010123772.1">
    <property type="nucleotide sequence ID" value="NC_056218.1"/>
</dbReference>
<dbReference type="GeneID" id="65327699"/>
<dbReference type="GO" id="GO:0009507">
    <property type="term" value="C:chloroplast"/>
    <property type="evidence" value="ECO:0007669"/>
    <property type="project" value="UniProtKB-SubCell"/>
</dbReference>
<dbReference type="GO" id="GO:0003723">
    <property type="term" value="F:RNA binding"/>
    <property type="evidence" value="ECO:0007669"/>
    <property type="project" value="UniProtKB-KW"/>
</dbReference>
<dbReference type="GO" id="GO:0006397">
    <property type="term" value="P:mRNA processing"/>
    <property type="evidence" value="ECO:0007669"/>
    <property type="project" value="UniProtKB-KW"/>
</dbReference>
<dbReference type="GO" id="GO:0008380">
    <property type="term" value="P:RNA splicing"/>
    <property type="evidence" value="ECO:0007669"/>
    <property type="project" value="UniProtKB-UniRule"/>
</dbReference>
<dbReference type="GO" id="GO:0008033">
    <property type="term" value="P:tRNA processing"/>
    <property type="evidence" value="ECO:0007669"/>
    <property type="project" value="UniProtKB-KW"/>
</dbReference>
<dbReference type="HAMAP" id="MF_01390">
    <property type="entry name" value="MatK"/>
    <property type="match status" value="1"/>
</dbReference>
<dbReference type="InterPro" id="IPR024937">
    <property type="entry name" value="Domain_X"/>
</dbReference>
<dbReference type="InterPro" id="IPR002866">
    <property type="entry name" value="Maturase_MatK"/>
</dbReference>
<dbReference type="InterPro" id="IPR024942">
    <property type="entry name" value="Maturase_MatK_N"/>
</dbReference>
<dbReference type="PANTHER" id="PTHR34811">
    <property type="entry name" value="MATURASE K"/>
    <property type="match status" value="1"/>
</dbReference>
<dbReference type="PANTHER" id="PTHR34811:SF1">
    <property type="entry name" value="MATURASE K"/>
    <property type="match status" value="1"/>
</dbReference>
<dbReference type="Pfam" id="PF01348">
    <property type="entry name" value="Intron_maturas2"/>
    <property type="match status" value="1"/>
</dbReference>
<dbReference type="Pfam" id="PF01824">
    <property type="entry name" value="MatK_N"/>
    <property type="match status" value="1"/>
</dbReference>
<organism>
    <name type="scientific">Acer monspessulanum</name>
    <name type="common">Montpellier maple</name>
    <dbReference type="NCBI Taxonomy" id="168566"/>
    <lineage>
        <taxon>Eukaryota</taxon>
        <taxon>Viridiplantae</taxon>
        <taxon>Streptophyta</taxon>
        <taxon>Embryophyta</taxon>
        <taxon>Tracheophyta</taxon>
        <taxon>Spermatophyta</taxon>
        <taxon>Magnoliopsida</taxon>
        <taxon>eudicotyledons</taxon>
        <taxon>Gunneridae</taxon>
        <taxon>Pentapetalae</taxon>
        <taxon>rosids</taxon>
        <taxon>malvids</taxon>
        <taxon>Sapindales</taxon>
        <taxon>Sapindaceae</taxon>
        <taxon>Hippocastanoideae</taxon>
        <taxon>Acereae</taxon>
        <taxon>Acer</taxon>
    </lineage>
</organism>
<protein>
    <recommendedName>
        <fullName evidence="1">Maturase K</fullName>
    </recommendedName>
    <alternativeName>
        <fullName evidence="1">Intron maturase</fullName>
    </alternativeName>
</protein>
<comment type="function">
    <text evidence="1">Usually encoded in the trnK tRNA gene intron. Probably assists in splicing its own and other chloroplast group II introns.</text>
</comment>
<comment type="subcellular location">
    <subcellularLocation>
        <location>Plastid</location>
        <location>Chloroplast</location>
    </subcellularLocation>
</comment>
<comment type="similarity">
    <text evidence="1">Belongs to the intron maturase 2 family. MatK subfamily.</text>
</comment>
<feature type="chain" id="PRO_0000143200" description="Maturase K">
    <location>
        <begin position="1"/>
        <end position="514"/>
    </location>
</feature>
<feature type="sequence variant" description="In strain: Isolate Mar AMO 01.">
    <original>F</original>
    <variation>L</variation>
    <location>
        <position position="176"/>
    </location>
</feature>
<feature type="sequence variant" description="In strain: Isolate 24/2 AMO 02 and Isolate Mar AMO 01.">
    <original>P</original>
    <variation>L</variation>
    <location>
        <position position="242"/>
    </location>
</feature>
<feature type="sequence variant" description="In strain: Isolate Mar AMO 01.">
    <original>T</original>
    <variation>A</variation>
    <location>
        <position position="367"/>
    </location>
</feature>
<feature type="sequence variant" description="In strain: Isolate 24/2 AMO 02.">
    <original>T</original>
    <variation>I</variation>
    <location>
        <position position="367"/>
    </location>
</feature>
<feature type="sequence variant" description="In strain: Isolate 24/2 AMO 02.">
    <original>T</original>
    <variation>M</variation>
    <location>
        <position position="467"/>
    </location>
</feature>
<feature type="sequence variant" description="In strain: Isolate 24/2 AMO 02.">
    <original>F</original>
    <variation>L</variation>
    <location>
        <position position="495"/>
    </location>
</feature>
<feature type="sequence variant" description="In strain: Isolate 24/2 AMO 02.">
    <original>L</original>
    <variation>F</variation>
    <location>
        <position position="509"/>
    </location>
</feature>
<geneLocation type="chloroplast"/>
<proteinExistence type="inferred from homology"/>
<sequence>MKEYQIHLELDRSQQHNFLYPLLFREYIYALAHDHGLNRSTIPLENGGYDNKSSSLSVKRLISRTYQRIHLSIYAKDSNPNHFIGHNNKFYSQMISEGFSVIVEIPFSLRLVAFLEGKEKEMAKSHNFQSIHSIFPFFENNFSHLHYVLDVLIPYPIRPEILVRTFRYWVKDASSFHLLRFFLHEYFNLNSLITPKKSNSIFSTSNPRFFLFLYNSHVYEYESIFFFLRNQSSHLRSTSSGPLFERISFYGKVEDLVQVFVNDFQDYLWLFKHPIMHYVRYQGKSVLASKDMPLLMNKWKYYLVNLWQWHFHVWSQPGRIHINHLYKDYIDFLGYLSRGRLNTLVVRSQMLENAFLIDNAMKQFETTVPIIPLIGSLTTARFCNSLGHPISKPTWADSSDSYIIDRFMRICRNLSHYHSGSSKKKSLYRIKYILRVSCVKSLVRKHKSTVRVFLKRLGSEFLEEFFTEEEHVLSLIFPRALFTSRRLYRGRVWYFDIICINDLVNHDKLEIVPN</sequence>
<accession>Q8SEL8</accession>
<accession>Q8SLH6</accession>
<accession>Q8SLH7</accession>
<keyword id="KW-0150">Chloroplast</keyword>
<keyword id="KW-0507">mRNA processing</keyword>
<keyword id="KW-0934">Plastid</keyword>
<keyword id="KW-0694">RNA-binding</keyword>
<keyword id="KW-0819">tRNA processing</keyword>
<gene>
    <name evidence="1" type="primary">matK</name>
</gene>
<name>MATK_ACEMO</name>